<evidence type="ECO:0000250" key="1">
    <source>
        <dbReference type="UniProtKB" id="P78417"/>
    </source>
</evidence>
<evidence type="ECO:0000305" key="2"/>
<gene>
    <name type="primary">Gsto1</name>
</gene>
<accession>Q9Z339</accession>
<organism>
    <name type="scientific">Rattus norvegicus</name>
    <name type="common">Rat</name>
    <dbReference type="NCBI Taxonomy" id="10116"/>
    <lineage>
        <taxon>Eukaryota</taxon>
        <taxon>Metazoa</taxon>
        <taxon>Chordata</taxon>
        <taxon>Craniata</taxon>
        <taxon>Vertebrata</taxon>
        <taxon>Euteleostomi</taxon>
        <taxon>Mammalia</taxon>
        <taxon>Eutheria</taxon>
        <taxon>Euarchontoglires</taxon>
        <taxon>Glires</taxon>
        <taxon>Rodentia</taxon>
        <taxon>Myomorpha</taxon>
        <taxon>Muroidea</taxon>
        <taxon>Muridae</taxon>
        <taxon>Murinae</taxon>
        <taxon>Rattus</taxon>
    </lineage>
</organism>
<protein>
    <recommendedName>
        <fullName>Glutathione S-transferase omega-1</fullName>
        <shortName>GSTO-1</shortName>
        <ecNumber evidence="1">2.5.1.18</ecNumber>
    </recommendedName>
    <alternativeName>
        <fullName>Glutathione S-transferase omega 1-1</fullName>
        <shortName>GSTO 1-1</shortName>
    </alternativeName>
    <alternativeName>
        <fullName>Glutathione-dependent dehydroascorbate reductase</fullName>
        <ecNumber evidence="1">1.8.5.1</ecNumber>
    </alternativeName>
    <alternativeName>
        <fullName>Monomethylarsonic acid reductase</fullName>
        <shortName>MMA(V) reductase</shortName>
        <ecNumber evidence="1">1.20.4.2</ecNumber>
    </alternativeName>
    <alternativeName>
        <fullName>S-(Phenacyl)glutathione reductase</fullName>
        <shortName>SPG-R</shortName>
    </alternativeName>
</protein>
<reference key="1">
    <citation type="journal article" date="1998" name="J. Biol. Chem.">
        <title>Molecular cloning and functional expression of rat liver glutathione-dependent dehydroascorbate reductase.</title>
        <authorList>
            <person name="Ishikawa T."/>
            <person name="Casini A.F."/>
            <person name="Nishikimi M."/>
        </authorList>
    </citation>
    <scope>NUCLEOTIDE SEQUENCE [MRNA]</scope>
    <source>
        <tissue>Liver</tissue>
    </source>
</reference>
<reference key="2">
    <citation type="submission" date="2007-09" db="UniProtKB">
        <authorList>
            <person name="Lubec G."/>
            <person name="Diao W."/>
            <person name="Kang S.U."/>
            <person name="Lubec S."/>
        </authorList>
    </citation>
    <scope>PROTEIN SEQUENCE OF 38-43 AND 123-132</scope>
    <scope>IDENTIFICATION BY MASS SPECTROMETRY</scope>
    <source>
        <strain>Sprague-Dawley</strain>
        <tissue>Brain</tissue>
        <tissue>Hippocampus</tissue>
    </source>
</reference>
<sequence>MSGASARSLGKGSAPPGPVPEGQIRVYSMRFCPFAQRTLMVLKAKGIRHEIININLKNKPEWFFEKNPFGLVPVLENTQGHLITESVITCEYLDEAYPEKKLFPDDPYEKACQKMTFELFSKVPSLVTSFIRAKRKEDHPGIKEELKKEFSKLEEAMANKRTAFFGGNSLSMIDYLIWPWFQRLEALELNECIDHTPKLKLWMATMQEDPVASSHFIDAKTYRDYLSLYLQDSPEACDYGL</sequence>
<dbReference type="EC" id="2.5.1.18" evidence="1"/>
<dbReference type="EC" id="1.8.5.1" evidence="1"/>
<dbReference type="EC" id="1.20.4.2" evidence="1"/>
<dbReference type="EMBL" id="AB008807">
    <property type="protein sequence ID" value="BAA34217.1"/>
    <property type="status" value="ALT_FRAME"/>
    <property type="molecule type" value="mRNA"/>
</dbReference>
<dbReference type="PDB" id="8QLL">
    <property type="method" value="X-ray"/>
    <property type="resolution" value="2.40 A"/>
    <property type="chains" value="A/B=2-241"/>
</dbReference>
<dbReference type="PDBsum" id="8QLL"/>
<dbReference type="SMR" id="Q9Z339"/>
<dbReference type="FunCoup" id="Q9Z339">
    <property type="interactions" value="1017"/>
</dbReference>
<dbReference type="IntAct" id="Q9Z339">
    <property type="interactions" value="2"/>
</dbReference>
<dbReference type="STRING" id="10116.ENSRNOP00000016851"/>
<dbReference type="iPTMnet" id="Q9Z339"/>
<dbReference type="PhosphoSitePlus" id="Q9Z339"/>
<dbReference type="SwissPalm" id="Q9Z339"/>
<dbReference type="jPOST" id="Q9Z339"/>
<dbReference type="PaxDb" id="10116-ENSRNOP00000016851"/>
<dbReference type="UCSC" id="RGD:70952">
    <property type="organism name" value="rat"/>
</dbReference>
<dbReference type="AGR" id="RGD:70952"/>
<dbReference type="RGD" id="70952">
    <property type="gene designation" value="Gsto1"/>
</dbReference>
<dbReference type="eggNOG" id="KOG0406">
    <property type="taxonomic scope" value="Eukaryota"/>
</dbReference>
<dbReference type="InParanoid" id="Q9Z339"/>
<dbReference type="PhylomeDB" id="Q9Z339"/>
<dbReference type="Reactome" id="R-RNO-156581">
    <property type="pathway name" value="Methylation"/>
</dbReference>
<dbReference type="Reactome" id="R-RNO-156590">
    <property type="pathway name" value="Glutathione conjugation"/>
</dbReference>
<dbReference type="Reactome" id="R-RNO-196836">
    <property type="pathway name" value="Vitamin C (ascorbate) metabolism"/>
</dbReference>
<dbReference type="PRO" id="PR:Q9Z339"/>
<dbReference type="Proteomes" id="UP000002494">
    <property type="component" value="Unplaced"/>
</dbReference>
<dbReference type="GO" id="GO:0030424">
    <property type="term" value="C:axon"/>
    <property type="evidence" value="ECO:0000314"/>
    <property type="project" value="RGD"/>
</dbReference>
<dbReference type="GO" id="GO:0005604">
    <property type="term" value="C:basement membrane"/>
    <property type="evidence" value="ECO:0000314"/>
    <property type="project" value="RGD"/>
</dbReference>
<dbReference type="GO" id="GO:0044297">
    <property type="term" value="C:cell body"/>
    <property type="evidence" value="ECO:0000314"/>
    <property type="project" value="RGD"/>
</dbReference>
<dbReference type="GO" id="GO:0005737">
    <property type="term" value="C:cytoplasm"/>
    <property type="evidence" value="ECO:0000266"/>
    <property type="project" value="RGD"/>
</dbReference>
<dbReference type="GO" id="GO:0005829">
    <property type="term" value="C:cytosol"/>
    <property type="evidence" value="ECO:0007669"/>
    <property type="project" value="UniProtKB-SubCell"/>
</dbReference>
<dbReference type="GO" id="GO:0031965">
    <property type="term" value="C:nuclear membrane"/>
    <property type="evidence" value="ECO:0000314"/>
    <property type="project" value="RGD"/>
</dbReference>
<dbReference type="GO" id="GO:0045174">
    <property type="term" value="F:glutathione dehydrogenase (ascorbate) activity"/>
    <property type="evidence" value="ECO:0000314"/>
    <property type="project" value="RGD"/>
</dbReference>
<dbReference type="GO" id="GO:0004364">
    <property type="term" value="F:glutathione transferase activity"/>
    <property type="evidence" value="ECO:0000250"/>
    <property type="project" value="UniProtKB"/>
</dbReference>
<dbReference type="GO" id="GO:0050610">
    <property type="term" value="F:methylarsonate reductase activity"/>
    <property type="evidence" value="ECO:0007669"/>
    <property type="project" value="UniProtKB-EC"/>
</dbReference>
<dbReference type="GO" id="GO:0016491">
    <property type="term" value="F:oxidoreductase activity"/>
    <property type="evidence" value="ECO:0000250"/>
    <property type="project" value="UniProtKB"/>
</dbReference>
<dbReference type="GO" id="GO:0071243">
    <property type="term" value="P:cellular response to arsenic-containing substance"/>
    <property type="evidence" value="ECO:0000250"/>
    <property type="project" value="UniProtKB"/>
</dbReference>
<dbReference type="GO" id="GO:0006749">
    <property type="term" value="P:glutathione metabolic process"/>
    <property type="evidence" value="ECO:0000318"/>
    <property type="project" value="GO_Central"/>
</dbReference>
<dbReference type="GO" id="GO:0019853">
    <property type="term" value="P:L-ascorbic acid biosynthetic process"/>
    <property type="evidence" value="ECO:0000315"/>
    <property type="project" value="RGD"/>
</dbReference>
<dbReference type="GO" id="GO:0019852">
    <property type="term" value="P:L-ascorbic acid metabolic process"/>
    <property type="evidence" value="ECO:0000250"/>
    <property type="project" value="UniProtKB"/>
</dbReference>
<dbReference type="GO" id="GO:0010880">
    <property type="term" value="P:regulation of release of sequestered calcium ion into cytosol by sarcoplasmic reticulum"/>
    <property type="evidence" value="ECO:0000266"/>
    <property type="project" value="RGD"/>
</dbReference>
<dbReference type="GO" id="GO:0042178">
    <property type="term" value="P:xenobiotic catabolic process"/>
    <property type="evidence" value="ECO:0000250"/>
    <property type="project" value="UniProtKB"/>
</dbReference>
<dbReference type="CDD" id="cd03184">
    <property type="entry name" value="GST_C_Omega"/>
    <property type="match status" value="1"/>
</dbReference>
<dbReference type="CDD" id="cd03055">
    <property type="entry name" value="GST_N_Omega"/>
    <property type="match status" value="1"/>
</dbReference>
<dbReference type="FunFam" id="1.20.1050.10:FF:000009">
    <property type="entry name" value="Glutathione S-transferase omega-1"/>
    <property type="match status" value="1"/>
</dbReference>
<dbReference type="FunFam" id="3.40.30.10:FF:000075">
    <property type="entry name" value="Glutathione S-transferase omega-1"/>
    <property type="match status" value="1"/>
</dbReference>
<dbReference type="Gene3D" id="1.20.1050.10">
    <property type="match status" value="1"/>
</dbReference>
<dbReference type="Gene3D" id="3.40.30.10">
    <property type="entry name" value="Glutaredoxin"/>
    <property type="match status" value="1"/>
</dbReference>
<dbReference type="InterPro" id="IPR010987">
    <property type="entry name" value="Glutathione-S-Trfase_C-like"/>
</dbReference>
<dbReference type="InterPro" id="IPR036282">
    <property type="entry name" value="Glutathione-S-Trfase_C_sf"/>
</dbReference>
<dbReference type="InterPro" id="IPR004045">
    <property type="entry name" value="Glutathione_S-Trfase_N"/>
</dbReference>
<dbReference type="InterPro" id="IPR004046">
    <property type="entry name" value="GST_C"/>
</dbReference>
<dbReference type="InterPro" id="IPR005442">
    <property type="entry name" value="GST_omega"/>
</dbReference>
<dbReference type="InterPro" id="IPR050983">
    <property type="entry name" value="GST_Omega/HSP26"/>
</dbReference>
<dbReference type="InterPro" id="IPR045073">
    <property type="entry name" value="Omega/Tau-like"/>
</dbReference>
<dbReference type="InterPro" id="IPR036249">
    <property type="entry name" value="Thioredoxin-like_sf"/>
</dbReference>
<dbReference type="PANTHER" id="PTHR43968">
    <property type="match status" value="1"/>
</dbReference>
<dbReference type="PANTHER" id="PTHR43968:SF5">
    <property type="entry name" value="GLUTATHIONE S-TRANSFERASE OMEGA-1"/>
    <property type="match status" value="1"/>
</dbReference>
<dbReference type="Pfam" id="PF00043">
    <property type="entry name" value="GST_C"/>
    <property type="match status" value="1"/>
</dbReference>
<dbReference type="Pfam" id="PF13409">
    <property type="entry name" value="GST_N_2"/>
    <property type="match status" value="1"/>
</dbReference>
<dbReference type="PRINTS" id="PR01625">
    <property type="entry name" value="GSTRNSFRASEO"/>
</dbReference>
<dbReference type="SFLD" id="SFLDG01152">
    <property type="entry name" value="Main.3:_Omega-_and_Tau-like"/>
    <property type="match status" value="1"/>
</dbReference>
<dbReference type="SFLD" id="SFLDG00358">
    <property type="entry name" value="Main_(cytGST)"/>
    <property type="match status" value="1"/>
</dbReference>
<dbReference type="SUPFAM" id="SSF47616">
    <property type="entry name" value="GST C-terminal domain-like"/>
    <property type="match status" value="1"/>
</dbReference>
<dbReference type="SUPFAM" id="SSF52833">
    <property type="entry name" value="Thioredoxin-like"/>
    <property type="match status" value="1"/>
</dbReference>
<dbReference type="PROSITE" id="PS50405">
    <property type="entry name" value="GST_CTER"/>
    <property type="match status" value="1"/>
</dbReference>
<dbReference type="PROSITE" id="PS50404">
    <property type="entry name" value="GST_NTER"/>
    <property type="match status" value="1"/>
</dbReference>
<keyword id="KW-0002">3D-structure</keyword>
<keyword id="KW-0007">Acetylation</keyword>
<keyword id="KW-0963">Cytoplasm</keyword>
<keyword id="KW-0903">Direct protein sequencing</keyword>
<keyword id="KW-0560">Oxidoreductase</keyword>
<keyword id="KW-0597">Phosphoprotein</keyword>
<keyword id="KW-1185">Reference proteome</keyword>
<keyword id="KW-0808">Transferase</keyword>
<feature type="initiator methionine" description="Removed" evidence="1">
    <location>
        <position position="1"/>
    </location>
</feature>
<feature type="chain" id="PRO_0000185887" description="Glutathione S-transferase omega-1">
    <location>
        <begin position="2"/>
        <end position="241"/>
    </location>
</feature>
<feature type="domain" description="GST N-terminal">
    <location>
        <begin position="22"/>
        <end position="101"/>
    </location>
</feature>
<feature type="domain" description="GST C-terminal">
    <location>
        <begin position="106"/>
        <end position="228"/>
    </location>
</feature>
<feature type="active site" description="Nucleophile" evidence="1">
    <location>
        <position position="32"/>
    </location>
</feature>
<feature type="binding site" evidence="1">
    <location>
        <position position="59"/>
    </location>
    <ligand>
        <name>glutathione</name>
        <dbReference type="ChEBI" id="CHEBI:57925"/>
    </ligand>
</feature>
<feature type="binding site" evidence="1">
    <location>
        <position position="72"/>
    </location>
    <ligand>
        <name>glutathione</name>
        <dbReference type="ChEBI" id="CHEBI:57925"/>
    </ligand>
</feature>
<feature type="binding site" evidence="1">
    <location>
        <begin position="85"/>
        <end position="86"/>
    </location>
    <ligand>
        <name>glutathione</name>
        <dbReference type="ChEBI" id="CHEBI:57925"/>
    </ligand>
</feature>
<feature type="modified residue" description="N-acetylserine" evidence="1">
    <location>
        <position position="2"/>
    </location>
</feature>
<feature type="modified residue" description="N6-acetyllysine" evidence="1">
    <location>
        <position position="57"/>
    </location>
</feature>
<feature type="modified residue" description="Phosphoserine" evidence="1">
    <location>
        <position position="129"/>
    </location>
</feature>
<feature type="modified residue" description="N6-acetyllysine" evidence="1">
    <location>
        <position position="143"/>
    </location>
</feature>
<feature type="modified residue" description="N6-acetyllysine" evidence="1">
    <location>
        <position position="148"/>
    </location>
</feature>
<feature type="modified residue" description="N6-acetyllysine" evidence="1">
    <location>
        <position position="152"/>
    </location>
</feature>
<name>GSTO1_RAT</name>
<proteinExistence type="evidence at protein level"/>
<comment type="function">
    <text evidence="1">Exhibits glutathione-dependent thiol transferase and dehydroascorbate reductase activities. Has S-(phenacyl)glutathione reductase activity. Also has glutathione S-transferase activity. Participates in the biotransformation of inorganic arsenic and reduces monomethylarsonic acid (MMA) and dimethylarsonic acid.</text>
</comment>
<comment type="catalytic activity">
    <reaction evidence="1">
        <text>RX + glutathione = an S-substituted glutathione + a halide anion + H(+)</text>
        <dbReference type="Rhea" id="RHEA:16437"/>
        <dbReference type="ChEBI" id="CHEBI:15378"/>
        <dbReference type="ChEBI" id="CHEBI:16042"/>
        <dbReference type="ChEBI" id="CHEBI:17792"/>
        <dbReference type="ChEBI" id="CHEBI:57925"/>
        <dbReference type="ChEBI" id="CHEBI:90779"/>
        <dbReference type="EC" id="2.5.1.18"/>
    </reaction>
</comment>
<comment type="catalytic activity">
    <reaction evidence="1">
        <text>L-dehydroascorbate + 2 glutathione = glutathione disulfide + L-ascorbate</text>
        <dbReference type="Rhea" id="RHEA:24424"/>
        <dbReference type="ChEBI" id="CHEBI:38290"/>
        <dbReference type="ChEBI" id="CHEBI:57925"/>
        <dbReference type="ChEBI" id="CHEBI:58297"/>
        <dbReference type="ChEBI" id="CHEBI:58539"/>
        <dbReference type="EC" id="1.8.5.1"/>
    </reaction>
</comment>
<comment type="catalytic activity">
    <reaction evidence="1">
        <text>methylarsonate + 2 glutathione + H(+) = methylarsonous acid + glutathione disulfide + H2O</text>
        <dbReference type="Rhea" id="RHEA:15969"/>
        <dbReference type="ChEBI" id="CHEBI:15377"/>
        <dbReference type="ChEBI" id="CHEBI:15378"/>
        <dbReference type="ChEBI" id="CHEBI:17826"/>
        <dbReference type="ChEBI" id="CHEBI:33409"/>
        <dbReference type="ChEBI" id="CHEBI:57925"/>
        <dbReference type="ChEBI" id="CHEBI:58297"/>
        <dbReference type="EC" id="1.20.4.2"/>
    </reaction>
</comment>
<comment type="subunit">
    <text evidence="1">Homodimer.</text>
</comment>
<comment type="subcellular location">
    <subcellularLocation>
        <location>Cytoplasm</location>
        <location>Cytosol</location>
    </subcellularLocation>
</comment>
<comment type="similarity">
    <text evidence="2">Belongs to the GST superfamily. Omega family.</text>
</comment>
<comment type="sequence caution" evidence="2">
    <conflict type="frameshift">
        <sequence resource="EMBL-CDS" id="BAA34217"/>
    </conflict>
</comment>